<organism>
    <name type="scientific">Hydrogenovibrio crunogenus (strain DSM 25203 / XCL-2)</name>
    <name type="common">Thiomicrospira crunogena</name>
    <dbReference type="NCBI Taxonomy" id="317025"/>
    <lineage>
        <taxon>Bacteria</taxon>
        <taxon>Pseudomonadati</taxon>
        <taxon>Pseudomonadota</taxon>
        <taxon>Gammaproteobacteria</taxon>
        <taxon>Thiotrichales</taxon>
        <taxon>Piscirickettsiaceae</taxon>
        <taxon>Hydrogenovibrio</taxon>
    </lineage>
</organism>
<accession>Q31GK0</accession>
<proteinExistence type="inferred from homology"/>
<comment type="function">
    <text evidence="1">One of the primary rRNA binding proteins, it binds directly to 16S rRNA where it helps nucleate assembly of the platform of the 30S subunit by binding and bridging several RNA helices of the 16S rRNA.</text>
</comment>
<comment type="function">
    <text evidence="1">Forms an intersubunit bridge (bridge B4) with the 23S rRNA of the 50S subunit in the ribosome.</text>
</comment>
<comment type="subunit">
    <text evidence="1">Part of the 30S ribosomal subunit. Forms a bridge to the 50S subunit in the 70S ribosome, contacting the 23S rRNA.</text>
</comment>
<comment type="similarity">
    <text evidence="1">Belongs to the universal ribosomal protein uS15 family.</text>
</comment>
<protein>
    <recommendedName>
        <fullName evidence="1">Small ribosomal subunit protein uS15</fullName>
    </recommendedName>
    <alternativeName>
        <fullName evidence="2">30S ribosomal protein S15</fullName>
    </alternativeName>
</protein>
<gene>
    <name evidence="1" type="primary">rpsO</name>
    <name type="ordered locus">Tcr_1128</name>
</gene>
<feature type="chain" id="PRO_0000255546" description="Small ribosomal subunit protein uS15">
    <location>
        <begin position="1"/>
        <end position="88"/>
    </location>
</feature>
<keyword id="KW-0687">Ribonucleoprotein</keyword>
<keyword id="KW-0689">Ribosomal protein</keyword>
<keyword id="KW-0694">RNA-binding</keyword>
<keyword id="KW-0699">rRNA-binding</keyword>
<sequence>MLTPEDKAAIVAEYATSEGDTGSPEVQVALLTHRITYLTEHFKSHIHDNHSRTGLLRLVSRRRKLLDYLHKKNAQRYFDLIKKLGLRK</sequence>
<evidence type="ECO:0000255" key="1">
    <source>
        <dbReference type="HAMAP-Rule" id="MF_01343"/>
    </source>
</evidence>
<evidence type="ECO:0000305" key="2"/>
<name>RS15_HYDCU</name>
<reference key="1">
    <citation type="journal article" date="2006" name="PLoS Biol.">
        <title>The genome of deep-sea vent chemolithoautotroph Thiomicrospira crunogena XCL-2.</title>
        <authorList>
            <person name="Scott K.M."/>
            <person name="Sievert S.M."/>
            <person name="Abril F.N."/>
            <person name="Ball L.A."/>
            <person name="Barrett C.J."/>
            <person name="Blake R.A."/>
            <person name="Boller A.J."/>
            <person name="Chain P.S.G."/>
            <person name="Clark J.A."/>
            <person name="Davis C.R."/>
            <person name="Detter C."/>
            <person name="Do K.F."/>
            <person name="Dobrinski K.P."/>
            <person name="Faza B.I."/>
            <person name="Fitzpatrick K.A."/>
            <person name="Freyermuth S.K."/>
            <person name="Harmer T.L."/>
            <person name="Hauser L.J."/>
            <person name="Huegler M."/>
            <person name="Kerfeld C.A."/>
            <person name="Klotz M.G."/>
            <person name="Kong W.W."/>
            <person name="Land M."/>
            <person name="Lapidus A."/>
            <person name="Larimer F.W."/>
            <person name="Longo D.L."/>
            <person name="Lucas S."/>
            <person name="Malfatti S.A."/>
            <person name="Massey S.E."/>
            <person name="Martin D.D."/>
            <person name="McCuddin Z."/>
            <person name="Meyer F."/>
            <person name="Moore J.L."/>
            <person name="Ocampo L.H. Jr."/>
            <person name="Paul J.H."/>
            <person name="Paulsen I.T."/>
            <person name="Reep D.K."/>
            <person name="Ren Q."/>
            <person name="Ross R.L."/>
            <person name="Sato P.Y."/>
            <person name="Thomas P."/>
            <person name="Tinkham L.E."/>
            <person name="Zeruth G.T."/>
        </authorList>
    </citation>
    <scope>NUCLEOTIDE SEQUENCE [LARGE SCALE GENOMIC DNA]</scope>
    <source>
        <strain>DSM 25203 / XCL-2</strain>
    </source>
</reference>
<dbReference type="EMBL" id="CP000109">
    <property type="protein sequence ID" value="ABB41723.1"/>
    <property type="molecule type" value="Genomic_DNA"/>
</dbReference>
<dbReference type="SMR" id="Q31GK0"/>
<dbReference type="STRING" id="317025.Tcr_1128"/>
<dbReference type="KEGG" id="tcx:Tcr_1128"/>
<dbReference type="eggNOG" id="COG0184">
    <property type="taxonomic scope" value="Bacteria"/>
</dbReference>
<dbReference type="HOGENOM" id="CLU_148518_0_0_6"/>
<dbReference type="OrthoDB" id="9799262at2"/>
<dbReference type="GO" id="GO:0022627">
    <property type="term" value="C:cytosolic small ribosomal subunit"/>
    <property type="evidence" value="ECO:0007669"/>
    <property type="project" value="TreeGrafter"/>
</dbReference>
<dbReference type="GO" id="GO:0019843">
    <property type="term" value="F:rRNA binding"/>
    <property type="evidence" value="ECO:0007669"/>
    <property type="project" value="UniProtKB-UniRule"/>
</dbReference>
<dbReference type="GO" id="GO:0003735">
    <property type="term" value="F:structural constituent of ribosome"/>
    <property type="evidence" value="ECO:0007669"/>
    <property type="project" value="InterPro"/>
</dbReference>
<dbReference type="GO" id="GO:0006412">
    <property type="term" value="P:translation"/>
    <property type="evidence" value="ECO:0007669"/>
    <property type="project" value="UniProtKB-UniRule"/>
</dbReference>
<dbReference type="CDD" id="cd00353">
    <property type="entry name" value="Ribosomal_S15p_S13e"/>
    <property type="match status" value="1"/>
</dbReference>
<dbReference type="FunFam" id="1.10.287.10:FF:000002">
    <property type="entry name" value="30S ribosomal protein S15"/>
    <property type="match status" value="1"/>
</dbReference>
<dbReference type="Gene3D" id="6.10.250.3130">
    <property type="match status" value="1"/>
</dbReference>
<dbReference type="Gene3D" id="1.10.287.10">
    <property type="entry name" value="S15/NS1, RNA-binding"/>
    <property type="match status" value="1"/>
</dbReference>
<dbReference type="HAMAP" id="MF_01343_B">
    <property type="entry name" value="Ribosomal_uS15_B"/>
    <property type="match status" value="1"/>
</dbReference>
<dbReference type="InterPro" id="IPR000589">
    <property type="entry name" value="Ribosomal_uS15"/>
</dbReference>
<dbReference type="InterPro" id="IPR005290">
    <property type="entry name" value="Ribosomal_uS15_bac-type"/>
</dbReference>
<dbReference type="InterPro" id="IPR009068">
    <property type="entry name" value="uS15_NS1_RNA-bd_sf"/>
</dbReference>
<dbReference type="NCBIfam" id="TIGR00952">
    <property type="entry name" value="S15_bact"/>
    <property type="match status" value="1"/>
</dbReference>
<dbReference type="PANTHER" id="PTHR23321">
    <property type="entry name" value="RIBOSOMAL PROTEIN S15, BACTERIAL AND ORGANELLAR"/>
    <property type="match status" value="1"/>
</dbReference>
<dbReference type="PANTHER" id="PTHR23321:SF26">
    <property type="entry name" value="SMALL RIBOSOMAL SUBUNIT PROTEIN US15M"/>
    <property type="match status" value="1"/>
</dbReference>
<dbReference type="Pfam" id="PF00312">
    <property type="entry name" value="Ribosomal_S15"/>
    <property type="match status" value="1"/>
</dbReference>
<dbReference type="SMART" id="SM01387">
    <property type="entry name" value="Ribosomal_S15"/>
    <property type="match status" value="1"/>
</dbReference>
<dbReference type="SUPFAM" id="SSF47060">
    <property type="entry name" value="S15/NS1 RNA-binding domain"/>
    <property type="match status" value="1"/>
</dbReference>
<dbReference type="PROSITE" id="PS00362">
    <property type="entry name" value="RIBOSOMAL_S15"/>
    <property type="match status" value="1"/>
</dbReference>